<name>FER5_RHOCA</name>
<evidence type="ECO:0000255" key="1">
    <source>
        <dbReference type="PROSITE-ProRule" id="PRU00465"/>
    </source>
</evidence>
<evidence type="ECO:0000305" key="2"/>
<reference key="1">
    <citation type="journal article" date="1993" name="Gene">
        <title>Sequence and transcript analysis of the nitrogenase structural gene operon (nifHDK) of Rhodobacter capsulatus: evidence for intramolecular processing of nifHDK mRNA.</title>
        <authorList>
            <person name="Willison J.C."/>
            <person name="Pierrard J."/>
            <person name="Huebner P."/>
        </authorList>
    </citation>
    <scope>NUCLEOTIDE SEQUENCE [GENOMIC DNA]</scope>
</reference>
<gene>
    <name type="primary">fdxD</name>
</gene>
<organism>
    <name type="scientific">Rhodobacter capsulatus</name>
    <name type="common">Rhodopseudomonas capsulata</name>
    <dbReference type="NCBI Taxonomy" id="1061"/>
    <lineage>
        <taxon>Bacteria</taxon>
        <taxon>Pseudomonadati</taxon>
        <taxon>Pseudomonadota</taxon>
        <taxon>Alphaproteobacteria</taxon>
        <taxon>Rhodobacterales</taxon>
        <taxon>Rhodobacter group</taxon>
        <taxon>Rhodobacter</taxon>
    </lineage>
</organism>
<proteinExistence type="inferred from homology"/>
<sequence>MPNITFTSPIMKKDKTIYAVAGNTATILALAKEHAIPIPFECGDGDCASCLIEVTHLDNKPAMAMMLTEKEKARLKELQMITAEEIEAAEVSDLPPRFRLACQFIPRDEDVMVHFTGTPGGSV</sequence>
<accession>P37097</accession>
<dbReference type="EMBL" id="X63352">
    <property type="protein sequence ID" value="CAA44953.1"/>
    <property type="molecule type" value="Genomic_DNA"/>
</dbReference>
<dbReference type="PIR" id="JN0887">
    <property type="entry name" value="FERFND"/>
</dbReference>
<dbReference type="RefSeq" id="WP_013066317.1">
    <property type="nucleotide sequence ID" value="NZ_VIBE01000010.1"/>
</dbReference>
<dbReference type="SMR" id="P37097"/>
<dbReference type="GeneID" id="31489523"/>
<dbReference type="OMA" id="WRLACQM"/>
<dbReference type="GO" id="GO:0051537">
    <property type="term" value="F:2 iron, 2 sulfur cluster binding"/>
    <property type="evidence" value="ECO:0007669"/>
    <property type="project" value="UniProtKB-KW"/>
</dbReference>
<dbReference type="GO" id="GO:0046872">
    <property type="term" value="F:metal ion binding"/>
    <property type="evidence" value="ECO:0007669"/>
    <property type="project" value="UniProtKB-KW"/>
</dbReference>
<dbReference type="GO" id="GO:0009399">
    <property type="term" value="P:nitrogen fixation"/>
    <property type="evidence" value="ECO:0007669"/>
    <property type="project" value="UniProtKB-KW"/>
</dbReference>
<dbReference type="CDD" id="cd00207">
    <property type="entry name" value="fer2"/>
    <property type="match status" value="1"/>
</dbReference>
<dbReference type="Gene3D" id="3.10.20.30">
    <property type="match status" value="1"/>
</dbReference>
<dbReference type="InterPro" id="IPR036010">
    <property type="entry name" value="2Fe-2S_ferredoxin-like_sf"/>
</dbReference>
<dbReference type="InterPro" id="IPR001041">
    <property type="entry name" value="2Fe-2S_ferredoxin-type"/>
</dbReference>
<dbReference type="InterPro" id="IPR006058">
    <property type="entry name" value="2Fe2S_fd_BS"/>
</dbReference>
<dbReference type="InterPro" id="IPR012675">
    <property type="entry name" value="Beta-grasp_dom_sf"/>
</dbReference>
<dbReference type="Pfam" id="PF00111">
    <property type="entry name" value="Fer2"/>
    <property type="match status" value="1"/>
</dbReference>
<dbReference type="SUPFAM" id="SSF54292">
    <property type="entry name" value="2Fe-2S ferredoxin-like"/>
    <property type="match status" value="1"/>
</dbReference>
<dbReference type="PROSITE" id="PS00197">
    <property type="entry name" value="2FE2S_FER_1"/>
    <property type="match status" value="1"/>
</dbReference>
<dbReference type="PROSITE" id="PS51085">
    <property type="entry name" value="2FE2S_FER_2"/>
    <property type="match status" value="1"/>
</dbReference>
<protein>
    <recommendedName>
        <fullName>Ferredoxin-5</fullName>
    </recommendedName>
    <alternativeName>
        <fullName>Ferredoxin V</fullName>
        <shortName>FdV</shortName>
    </alternativeName>
    <alternativeName>
        <fullName>Ferredoxin, plant-type</fullName>
    </alternativeName>
</protein>
<comment type="function">
    <text>Ferredoxins are iron-sulfur proteins that transfer electrons in a wide variety of metabolic reactions. This ferredoxin probably participates in nitrogen fixation.</text>
</comment>
<comment type="cofactor">
    <cofactor evidence="2">
        <name>[2Fe-2S] cluster</name>
        <dbReference type="ChEBI" id="CHEBI:190135"/>
    </cofactor>
    <text evidence="2">Binds 1 [2Fe-2S] cluster.</text>
</comment>
<comment type="similarity">
    <text evidence="2">Belongs to the 2Fe2S plant-type ferredoxin family.</text>
</comment>
<keyword id="KW-0001">2Fe-2S</keyword>
<keyword id="KW-0249">Electron transport</keyword>
<keyword id="KW-0408">Iron</keyword>
<keyword id="KW-0411">Iron-sulfur</keyword>
<keyword id="KW-0479">Metal-binding</keyword>
<keyword id="KW-0535">Nitrogen fixation</keyword>
<keyword id="KW-0813">Transport</keyword>
<feature type="chain" id="PRO_0000189390" description="Ferredoxin-5">
    <location>
        <begin position="1"/>
        <end position="123"/>
    </location>
</feature>
<feature type="domain" description="2Fe-2S ferredoxin-type" evidence="1">
    <location>
        <begin position="2"/>
        <end position="119"/>
    </location>
</feature>
<feature type="binding site" evidence="1">
    <location>
        <position position="42"/>
    </location>
    <ligand>
        <name>[2Fe-2S] cluster</name>
        <dbReference type="ChEBI" id="CHEBI:190135"/>
    </ligand>
</feature>
<feature type="binding site" evidence="1">
    <location>
        <position position="47"/>
    </location>
    <ligand>
        <name>[2Fe-2S] cluster</name>
        <dbReference type="ChEBI" id="CHEBI:190135"/>
    </ligand>
</feature>
<feature type="binding site" evidence="1">
    <location>
        <position position="50"/>
    </location>
    <ligand>
        <name>[2Fe-2S] cluster</name>
        <dbReference type="ChEBI" id="CHEBI:190135"/>
    </ligand>
</feature>
<feature type="binding site" evidence="1">
    <location>
        <position position="102"/>
    </location>
    <ligand>
        <name>[2Fe-2S] cluster</name>
        <dbReference type="ChEBI" id="CHEBI:190135"/>
    </ligand>
</feature>